<protein>
    <recommendedName>
        <fullName evidence="1">2,3,4,5-tetrahydropyridine-2,6-dicarboxylate N-acetyltransferase</fullName>
        <ecNumber evidence="1">2.3.1.89</ecNumber>
    </recommendedName>
    <alternativeName>
        <fullName evidence="1">Tetrahydrodipicolinate N-acetyltransferase</fullName>
        <shortName evidence="1">THP acetyltransferase</shortName>
        <shortName evidence="1">Tetrahydropicolinate acetylase</shortName>
    </alternativeName>
</protein>
<comment type="function">
    <text evidence="1">Catalyzes the transfer of an acetyl group from acetyl-CoA to tetrahydrodipicolinate.</text>
</comment>
<comment type="catalytic activity">
    <reaction evidence="1">
        <text>(S)-2,3,4,5-tetrahydrodipicolinate + acetyl-CoA + H2O = L-2-acetamido-6-oxoheptanedioate + CoA</text>
        <dbReference type="Rhea" id="RHEA:13085"/>
        <dbReference type="ChEBI" id="CHEBI:15377"/>
        <dbReference type="ChEBI" id="CHEBI:16845"/>
        <dbReference type="ChEBI" id="CHEBI:57287"/>
        <dbReference type="ChEBI" id="CHEBI:57288"/>
        <dbReference type="ChEBI" id="CHEBI:58117"/>
        <dbReference type="EC" id="2.3.1.89"/>
    </reaction>
</comment>
<comment type="pathway">
    <text evidence="1">Amino-acid biosynthesis; L-lysine biosynthesis via DAP pathway; LL-2,6-diaminopimelate from (S)-tetrahydrodipicolinate (acetylase route): step 1/3.</text>
</comment>
<comment type="similarity">
    <text evidence="1">Belongs to the transferase hexapeptide repeat family. DapH subfamily.</text>
</comment>
<accession>Q635U7</accession>
<name>DAPH_BACCZ</name>
<evidence type="ECO:0000255" key="1">
    <source>
        <dbReference type="HAMAP-Rule" id="MF_01691"/>
    </source>
</evidence>
<reference key="1">
    <citation type="journal article" date="2006" name="J. Bacteriol.">
        <title>Pathogenomic sequence analysis of Bacillus cereus and Bacillus thuringiensis isolates closely related to Bacillus anthracis.</title>
        <authorList>
            <person name="Han C.S."/>
            <person name="Xie G."/>
            <person name="Challacombe J.F."/>
            <person name="Altherr M.R."/>
            <person name="Bhotika S.S."/>
            <person name="Bruce D."/>
            <person name="Campbell C.S."/>
            <person name="Campbell M.L."/>
            <person name="Chen J."/>
            <person name="Chertkov O."/>
            <person name="Cleland C."/>
            <person name="Dimitrijevic M."/>
            <person name="Doggett N.A."/>
            <person name="Fawcett J.J."/>
            <person name="Glavina T."/>
            <person name="Goodwin L.A."/>
            <person name="Hill K.K."/>
            <person name="Hitchcock P."/>
            <person name="Jackson P.J."/>
            <person name="Keim P."/>
            <person name="Kewalramani A.R."/>
            <person name="Longmire J."/>
            <person name="Lucas S."/>
            <person name="Malfatti S."/>
            <person name="McMurry K."/>
            <person name="Meincke L.J."/>
            <person name="Misra M."/>
            <person name="Moseman B.L."/>
            <person name="Mundt M."/>
            <person name="Munk A.C."/>
            <person name="Okinaka R.T."/>
            <person name="Parson-Quintana B."/>
            <person name="Reilly L.P."/>
            <person name="Richardson P."/>
            <person name="Robinson D.L."/>
            <person name="Rubin E."/>
            <person name="Saunders E."/>
            <person name="Tapia R."/>
            <person name="Tesmer J.G."/>
            <person name="Thayer N."/>
            <person name="Thompson L.S."/>
            <person name="Tice H."/>
            <person name="Ticknor L.O."/>
            <person name="Wills P.L."/>
            <person name="Brettin T.S."/>
            <person name="Gilna P."/>
        </authorList>
    </citation>
    <scope>NUCLEOTIDE SEQUENCE [LARGE SCALE GENOMIC DNA]</scope>
    <source>
        <strain>ZK / E33L</strain>
    </source>
</reference>
<keyword id="KW-0012">Acyltransferase</keyword>
<keyword id="KW-0028">Amino-acid biosynthesis</keyword>
<keyword id="KW-0220">Diaminopimelate biosynthesis</keyword>
<keyword id="KW-0457">Lysine biosynthesis</keyword>
<keyword id="KW-0677">Repeat</keyword>
<keyword id="KW-0808">Transferase</keyword>
<organism>
    <name type="scientific">Bacillus cereus (strain ZK / E33L)</name>
    <dbReference type="NCBI Taxonomy" id="288681"/>
    <lineage>
        <taxon>Bacteria</taxon>
        <taxon>Bacillati</taxon>
        <taxon>Bacillota</taxon>
        <taxon>Bacilli</taxon>
        <taxon>Bacillales</taxon>
        <taxon>Bacillaceae</taxon>
        <taxon>Bacillus</taxon>
        <taxon>Bacillus cereus group</taxon>
    </lineage>
</organism>
<feature type="chain" id="PRO_0000376633" description="2,3,4,5-tetrahydropyridine-2,6-dicarboxylate N-acetyltransferase">
    <location>
        <begin position="1"/>
        <end position="240"/>
    </location>
</feature>
<dbReference type="EC" id="2.3.1.89" evidence="1"/>
<dbReference type="EMBL" id="CP000001">
    <property type="protein sequence ID" value="AAU16528.1"/>
    <property type="molecule type" value="Genomic_DNA"/>
</dbReference>
<dbReference type="SMR" id="Q635U7"/>
<dbReference type="KEGG" id="bcz:BCE33L3739"/>
<dbReference type="PATRIC" id="fig|288681.22.peg.1670"/>
<dbReference type="UniPathway" id="UPA00034">
    <property type="reaction ID" value="UER00022"/>
</dbReference>
<dbReference type="Proteomes" id="UP000002612">
    <property type="component" value="Chromosome"/>
</dbReference>
<dbReference type="GO" id="GO:0047200">
    <property type="term" value="F:tetrahydrodipicolinate N-acetyltransferase activity"/>
    <property type="evidence" value="ECO:0007669"/>
    <property type="project" value="UniProtKB-EC"/>
</dbReference>
<dbReference type="GO" id="GO:0019877">
    <property type="term" value="P:diaminopimelate biosynthetic process"/>
    <property type="evidence" value="ECO:0007669"/>
    <property type="project" value="UniProtKB-UniRule"/>
</dbReference>
<dbReference type="GO" id="GO:0009089">
    <property type="term" value="P:lysine biosynthetic process via diaminopimelate"/>
    <property type="evidence" value="ECO:0007669"/>
    <property type="project" value="UniProtKB-UniRule"/>
</dbReference>
<dbReference type="CDD" id="cd03350">
    <property type="entry name" value="LbH_THP_succinylT"/>
    <property type="match status" value="1"/>
</dbReference>
<dbReference type="Gene3D" id="2.160.10.10">
    <property type="entry name" value="Hexapeptide repeat proteins"/>
    <property type="match status" value="1"/>
</dbReference>
<dbReference type="Gene3D" id="3.30.70.250">
    <property type="entry name" value="Malonyl-CoA ACP transacylase, ACP-binding"/>
    <property type="match status" value="1"/>
</dbReference>
<dbReference type="HAMAP" id="MF_01691">
    <property type="entry name" value="DapH"/>
    <property type="match status" value="1"/>
</dbReference>
<dbReference type="InterPro" id="IPR019873">
    <property type="entry name" value="DapH"/>
</dbReference>
<dbReference type="InterPro" id="IPR013710">
    <property type="entry name" value="DapH_N"/>
</dbReference>
<dbReference type="InterPro" id="IPR001451">
    <property type="entry name" value="Hexapep"/>
</dbReference>
<dbReference type="InterPro" id="IPR018357">
    <property type="entry name" value="Hexapep_transf_CS"/>
</dbReference>
<dbReference type="InterPro" id="IPR050179">
    <property type="entry name" value="Trans_hexapeptide_repeat"/>
</dbReference>
<dbReference type="InterPro" id="IPR011004">
    <property type="entry name" value="Trimer_LpxA-like_sf"/>
</dbReference>
<dbReference type="NCBIfam" id="TIGR03532">
    <property type="entry name" value="DapD_Ac"/>
    <property type="match status" value="1"/>
</dbReference>
<dbReference type="PANTHER" id="PTHR43300:SF10">
    <property type="entry name" value="2,3,4,5-TETRAHYDROPYRIDINE-2,6-DICARBOXYLATE N-ACETYLTRANSFERASE"/>
    <property type="match status" value="1"/>
</dbReference>
<dbReference type="PANTHER" id="PTHR43300">
    <property type="entry name" value="ACETYLTRANSFERASE"/>
    <property type="match status" value="1"/>
</dbReference>
<dbReference type="Pfam" id="PF08503">
    <property type="entry name" value="DapH_N"/>
    <property type="match status" value="1"/>
</dbReference>
<dbReference type="Pfam" id="PF00132">
    <property type="entry name" value="Hexapep"/>
    <property type="match status" value="1"/>
</dbReference>
<dbReference type="Pfam" id="PF14602">
    <property type="entry name" value="Hexapep_2"/>
    <property type="match status" value="1"/>
</dbReference>
<dbReference type="SUPFAM" id="SSF51161">
    <property type="entry name" value="Trimeric LpxA-like enzymes"/>
    <property type="match status" value="1"/>
</dbReference>
<dbReference type="PROSITE" id="PS00101">
    <property type="entry name" value="HEXAPEP_TRANSFERASES"/>
    <property type="match status" value="1"/>
</dbReference>
<gene>
    <name evidence="1" type="primary">dapH</name>
    <name type="ordered locus">BCE33L3739</name>
</gene>
<proteinExistence type="inferred from homology"/>
<sequence>MKMMDANEIISFIQKSEKKTPVKVYIKGDLKEVTFPETVQAFVNKKSGVLFGEWSEIKTILDENSKYIVDYVVENDRRNSAIPMLDLKGIKARIEPGAIIRDHVEIGDNAVIMMNATINIGAVIGEGSMIDMNAVLGGRATVGKNCHVGAGAVLAGVIEPPSAKPVIVEDDVVIGANVVVLEGVTVGKGAVVAAGAVVTEDVPPYTVVAGTPARVIKEIDEKTKAKTEIKQELRQLNPEK</sequence>